<feature type="chain" id="PRO_1000062648" description="Acetyl-coenzyme A carboxylase carboxyl transferase subunit alpha">
    <location>
        <begin position="1"/>
        <end position="329"/>
    </location>
</feature>
<feature type="domain" description="CoA carboxyltransferase C-terminal" evidence="2">
    <location>
        <begin position="40"/>
        <end position="294"/>
    </location>
</feature>
<accession>A2C0Z2</accession>
<proteinExistence type="inferred from homology"/>
<sequence>MARRFLLEFEKPLVELENQIDQIRELARDSEVDVSQQLLQLETLAARRREEIFHALTPAQKIQVARHPQRPSTLDYIQMFCDDWVELHGDRNGTDDQALIGGLARIGEKSVLLIGQQKGRDTKENVARNFGMAKPGGYRKALRLMDHADRFNLPIISFIDTPGAYAGLIAEEQGQGEAIAVNLREMFRLTVPIIATVIGEGGSGGALGIGVADRLLMFEHSVYTVASPEACASILWRDAGKAPEAASALKITGPDLMKLGIVDEVLKEPSGGNNWAPLQAGDTLKNALEKHLSELLALSPDELRNNRYSKFRKMGKYLESQSIESEISV</sequence>
<keyword id="KW-0067">ATP-binding</keyword>
<keyword id="KW-0963">Cytoplasm</keyword>
<keyword id="KW-0275">Fatty acid biosynthesis</keyword>
<keyword id="KW-0276">Fatty acid metabolism</keyword>
<keyword id="KW-0444">Lipid biosynthesis</keyword>
<keyword id="KW-0443">Lipid metabolism</keyword>
<keyword id="KW-0547">Nucleotide-binding</keyword>
<keyword id="KW-0808">Transferase</keyword>
<gene>
    <name evidence="1" type="primary">accA</name>
    <name type="ordered locus">NATL1_05901</name>
</gene>
<dbReference type="EC" id="2.1.3.15" evidence="1"/>
<dbReference type="EMBL" id="CP000553">
    <property type="protein sequence ID" value="ABM75152.1"/>
    <property type="molecule type" value="Genomic_DNA"/>
</dbReference>
<dbReference type="RefSeq" id="WP_011823326.1">
    <property type="nucleotide sequence ID" value="NC_008819.1"/>
</dbReference>
<dbReference type="SMR" id="A2C0Z2"/>
<dbReference type="KEGG" id="pme:NATL1_05901"/>
<dbReference type="eggNOG" id="COG0825">
    <property type="taxonomic scope" value="Bacteria"/>
</dbReference>
<dbReference type="HOGENOM" id="CLU_015486_0_2_3"/>
<dbReference type="UniPathway" id="UPA00655">
    <property type="reaction ID" value="UER00711"/>
</dbReference>
<dbReference type="Proteomes" id="UP000002592">
    <property type="component" value="Chromosome"/>
</dbReference>
<dbReference type="GO" id="GO:0009317">
    <property type="term" value="C:acetyl-CoA carboxylase complex"/>
    <property type="evidence" value="ECO:0007669"/>
    <property type="project" value="InterPro"/>
</dbReference>
<dbReference type="GO" id="GO:0003989">
    <property type="term" value="F:acetyl-CoA carboxylase activity"/>
    <property type="evidence" value="ECO:0007669"/>
    <property type="project" value="InterPro"/>
</dbReference>
<dbReference type="GO" id="GO:0005524">
    <property type="term" value="F:ATP binding"/>
    <property type="evidence" value="ECO:0007669"/>
    <property type="project" value="UniProtKB-KW"/>
</dbReference>
<dbReference type="GO" id="GO:0016743">
    <property type="term" value="F:carboxyl- or carbamoyltransferase activity"/>
    <property type="evidence" value="ECO:0007669"/>
    <property type="project" value="UniProtKB-UniRule"/>
</dbReference>
<dbReference type="GO" id="GO:0006633">
    <property type="term" value="P:fatty acid biosynthetic process"/>
    <property type="evidence" value="ECO:0007669"/>
    <property type="project" value="UniProtKB-KW"/>
</dbReference>
<dbReference type="GO" id="GO:2001295">
    <property type="term" value="P:malonyl-CoA biosynthetic process"/>
    <property type="evidence" value="ECO:0007669"/>
    <property type="project" value="UniProtKB-UniRule"/>
</dbReference>
<dbReference type="Gene3D" id="3.90.226.10">
    <property type="entry name" value="2-enoyl-CoA Hydratase, Chain A, domain 1"/>
    <property type="match status" value="1"/>
</dbReference>
<dbReference type="HAMAP" id="MF_00823">
    <property type="entry name" value="AcetylCoA_CT_alpha"/>
    <property type="match status" value="1"/>
</dbReference>
<dbReference type="InterPro" id="IPR001095">
    <property type="entry name" value="Acetyl_CoA_COase_a_su"/>
</dbReference>
<dbReference type="InterPro" id="IPR029045">
    <property type="entry name" value="ClpP/crotonase-like_dom_sf"/>
</dbReference>
<dbReference type="InterPro" id="IPR011763">
    <property type="entry name" value="COA_CT_C"/>
</dbReference>
<dbReference type="NCBIfam" id="TIGR00513">
    <property type="entry name" value="accA"/>
    <property type="match status" value="1"/>
</dbReference>
<dbReference type="NCBIfam" id="NF041504">
    <property type="entry name" value="AccA_sub"/>
    <property type="match status" value="1"/>
</dbReference>
<dbReference type="NCBIfam" id="NF004344">
    <property type="entry name" value="PRK05724.1"/>
    <property type="match status" value="1"/>
</dbReference>
<dbReference type="PANTHER" id="PTHR42853">
    <property type="entry name" value="ACETYL-COENZYME A CARBOXYLASE CARBOXYL TRANSFERASE SUBUNIT ALPHA"/>
    <property type="match status" value="1"/>
</dbReference>
<dbReference type="PANTHER" id="PTHR42853:SF3">
    <property type="entry name" value="ACETYL-COENZYME A CARBOXYLASE CARBOXYL TRANSFERASE SUBUNIT ALPHA, CHLOROPLASTIC"/>
    <property type="match status" value="1"/>
</dbReference>
<dbReference type="Pfam" id="PF03255">
    <property type="entry name" value="ACCA"/>
    <property type="match status" value="1"/>
</dbReference>
<dbReference type="PRINTS" id="PR01069">
    <property type="entry name" value="ACCCTRFRASEA"/>
</dbReference>
<dbReference type="SUPFAM" id="SSF52096">
    <property type="entry name" value="ClpP/crotonase"/>
    <property type="match status" value="1"/>
</dbReference>
<dbReference type="PROSITE" id="PS50989">
    <property type="entry name" value="COA_CT_CTER"/>
    <property type="match status" value="1"/>
</dbReference>
<evidence type="ECO:0000255" key="1">
    <source>
        <dbReference type="HAMAP-Rule" id="MF_00823"/>
    </source>
</evidence>
<evidence type="ECO:0000255" key="2">
    <source>
        <dbReference type="PROSITE-ProRule" id="PRU01137"/>
    </source>
</evidence>
<organism>
    <name type="scientific">Prochlorococcus marinus (strain NATL1A)</name>
    <dbReference type="NCBI Taxonomy" id="167555"/>
    <lineage>
        <taxon>Bacteria</taxon>
        <taxon>Bacillati</taxon>
        <taxon>Cyanobacteriota</taxon>
        <taxon>Cyanophyceae</taxon>
        <taxon>Synechococcales</taxon>
        <taxon>Prochlorococcaceae</taxon>
        <taxon>Prochlorococcus</taxon>
    </lineage>
</organism>
<protein>
    <recommendedName>
        <fullName evidence="1">Acetyl-coenzyme A carboxylase carboxyl transferase subunit alpha</fullName>
        <shortName evidence="1">ACCase subunit alpha</shortName>
        <shortName evidence="1">Acetyl-CoA carboxylase carboxyltransferase subunit alpha</shortName>
        <ecNumber evidence="1">2.1.3.15</ecNumber>
    </recommendedName>
</protein>
<name>ACCA_PROM1</name>
<reference key="1">
    <citation type="journal article" date="2007" name="PLoS Genet.">
        <title>Patterns and implications of gene gain and loss in the evolution of Prochlorococcus.</title>
        <authorList>
            <person name="Kettler G.C."/>
            <person name="Martiny A.C."/>
            <person name="Huang K."/>
            <person name="Zucker J."/>
            <person name="Coleman M.L."/>
            <person name="Rodrigue S."/>
            <person name="Chen F."/>
            <person name="Lapidus A."/>
            <person name="Ferriera S."/>
            <person name="Johnson J."/>
            <person name="Steglich C."/>
            <person name="Church G.M."/>
            <person name="Richardson P."/>
            <person name="Chisholm S.W."/>
        </authorList>
    </citation>
    <scope>NUCLEOTIDE SEQUENCE [LARGE SCALE GENOMIC DNA]</scope>
    <source>
        <strain>NATL1A</strain>
    </source>
</reference>
<comment type="function">
    <text evidence="1">Component of the acetyl coenzyme A carboxylase (ACC) complex. First, biotin carboxylase catalyzes the carboxylation of biotin on its carrier protein (BCCP) and then the CO(2) group is transferred by the carboxyltransferase to acetyl-CoA to form malonyl-CoA.</text>
</comment>
<comment type="catalytic activity">
    <reaction evidence="1">
        <text>N(6)-carboxybiotinyl-L-lysyl-[protein] + acetyl-CoA = N(6)-biotinyl-L-lysyl-[protein] + malonyl-CoA</text>
        <dbReference type="Rhea" id="RHEA:54728"/>
        <dbReference type="Rhea" id="RHEA-COMP:10505"/>
        <dbReference type="Rhea" id="RHEA-COMP:10506"/>
        <dbReference type="ChEBI" id="CHEBI:57288"/>
        <dbReference type="ChEBI" id="CHEBI:57384"/>
        <dbReference type="ChEBI" id="CHEBI:83144"/>
        <dbReference type="ChEBI" id="CHEBI:83145"/>
        <dbReference type="EC" id="2.1.3.15"/>
    </reaction>
</comment>
<comment type="pathway">
    <text evidence="1">Lipid metabolism; malonyl-CoA biosynthesis; malonyl-CoA from acetyl-CoA: step 1/1.</text>
</comment>
<comment type="subunit">
    <text evidence="1">Acetyl-CoA carboxylase is a heterohexamer composed of biotin carboxyl carrier protein (AccB), biotin carboxylase (AccC) and two subunits each of ACCase subunit alpha (AccA) and ACCase subunit beta (AccD).</text>
</comment>
<comment type="subcellular location">
    <subcellularLocation>
        <location evidence="1">Cytoplasm</location>
    </subcellularLocation>
</comment>
<comment type="similarity">
    <text evidence="1">Belongs to the AccA family.</text>
</comment>